<name>CH10_ALISL</name>
<proteinExistence type="inferred from homology"/>
<gene>
    <name evidence="1" type="primary">groES</name>
    <name evidence="1" type="synonym">groS</name>
    <name type="ordered locus">VSAL_I0018</name>
</gene>
<comment type="function">
    <text evidence="1">Together with the chaperonin GroEL, plays an essential role in assisting protein folding. The GroEL-GroES system forms a nano-cage that allows encapsulation of the non-native substrate proteins and provides a physical environment optimized to promote and accelerate protein folding. GroES binds to the apical surface of the GroEL ring, thereby capping the opening of the GroEL channel.</text>
</comment>
<comment type="subunit">
    <text evidence="1">Heptamer of 7 subunits arranged in a ring. Interacts with the chaperonin GroEL.</text>
</comment>
<comment type="subcellular location">
    <subcellularLocation>
        <location evidence="1">Cytoplasm</location>
    </subcellularLocation>
</comment>
<comment type="similarity">
    <text evidence="1">Belongs to the GroES chaperonin family.</text>
</comment>
<reference key="1">
    <citation type="journal article" date="2008" name="BMC Genomics">
        <title>The genome sequence of the fish pathogen Aliivibrio salmonicida strain LFI1238 shows extensive evidence of gene decay.</title>
        <authorList>
            <person name="Hjerde E."/>
            <person name="Lorentzen M.S."/>
            <person name="Holden M.T."/>
            <person name="Seeger K."/>
            <person name="Paulsen S."/>
            <person name="Bason N."/>
            <person name="Churcher C."/>
            <person name="Harris D."/>
            <person name="Norbertczak H."/>
            <person name="Quail M.A."/>
            <person name="Sanders S."/>
            <person name="Thurston S."/>
            <person name="Parkhill J."/>
            <person name="Willassen N.P."/>
            <person name="Thomson N.R."/>
        </authorList>
    </citation>
    <scope>NUCLEOTIDE SEQUENCE [LARGE SCALE GENOMIC DNA]</scope>
    <source>
        <strain>LFI1238</strain>
    </source>
</reference>
<dbReference type="EMBL" id="FM178379">
    <property type="protein sequence ID" value="CAQ77703.1"/>
    <property type="molecule type" value="Genomic_DNA"/>
</dbReference>
<dbReference type="RefSeq" id="WP_012548927.1">
    <property type="nucleotide sequence ID" value="NC_011312.1"/>
</dbReference>
<dbReference type="SMR" id="B6ENX1"/>
<dbReference type="KEGG" id="vsa:VSAL_I0018"/>
<dbReference type="eggNOG" id="COG0234">
    <property type="taxonomic scope" value="Bacteria"/>
</dbReference>
<dbReference type="HOGENOM" id="CLU_132825_1_1_6"/>
<dbReference type="Proteomes" id="UP000001730">
    <property type="component" value="Chromosome 1"/>
</dbReference>
<dbReference type="GO" id="GO:0005737">
    <property type="term" value="C:cytoplasm"/>
    <property type="evidence" value="ECO:0007669"/>
    <property type="project" value="UniProtKB-SubCell"/>
</dbReference>
<dbReference type="GO" id="GO:0005524">
    <property type="term" value="F:ATP binding"/>
    <property type="evidence" value="ECO:0007669"/>
    <property type="project" value="InterPro"/>
</dbReference>
<dbReference type="GO" id="GO:0046872">
    <property type="term" value="F:metal ion binding"/>
    <property type="evidence" value="ECO:0007669"/>
    <property type="project" value="TreeGrafter"/>
</dbReference>
<dbReference type="GO" id="GO:0044183">
    <property type="term" value="F:protein folding chaperone"/>
    <property type="evidence" value="ECO:0007669"/>
    <property type="project" value="InterPro"/>
</dbReference>
<dbReference type="GO" id="GO:0051087">
    <property type="term" value="F:protein-folding chaperone binding"/>
    <property type="evidence" value="ECO:0007669"/>
    <property type="project" value="TreeGrafter"/>
</dbReference>
<dbReference type="GO" id="GO:0051082">
    <property type="term" value="F:unfolded protein binding"/>
    <property type="evidence" value="ECO:0007669"/>
    <property type="project" value="TreeGrafter"/>
</dbReference>
<dbReference type="GO" id="GO:0051085">
    <property type="term" value="P:chaperone cofactor-dependent protein refolding"/>
    <property type="evidence" value="ECO:0007669"/>
    <property type="project" value="TreeGrafter"/>
</dbReference>
<dbReference type="CDD" id="cd00320">
    <property type="entry name" value="cpn10"/>
    <property type="match status" value="1"/>
</dbReference>
<dbReference type="FunFam" id="2.30.33.40:FF:000001">
    <property type="entry name" value="10 kDa chaperonin"/>
    <property type="match status" value="1"/>
</dbReference>
<dbReference type="Gene3D" id="2.30.33.40">
    <property type="entry name" value="GroES chaperonin"/>
    <property type="match status" value="1"/>
</dbReference>
<dbReference type="HAMAP" id="MF_00580">
    <property type="entry name" value="CH10"/>
    <property type="match status" value="1"/>
</dbReference>
<dbReference type="InterPro" id="IPR020818">
    <property type="entry name" value="Chaperonin_GroES"/>
</dbReference>
<dbReference type="InterPro" id="IPR037124">
    <property type="entry name" value="Chaperonin_GroES_sf"/>
</dbReference>
<dbReference type="InterPro" id="IPR018369">
    <property type="entry name" value="Chaprnonin_Cpn10_CS"/>
</dbReference>
<dbReference type="InterPro" id="IPR011032">
    <property type="entry name" value="GroES-like_sf"/>
</dbReference>
<dbReference type="NCBIfam" id="NF001526">
    <property type="entry name" value="PRK00364.1-1"/>
    <property type="match status" value="1"/>
</dbReference>
<dbReference type="NCBIfam" id="NF001527">
    <property type="entry name" value="PRK00364.1-2"/>
    <property type="match status" value="1"/>
</dbReference>
<dbReference type="NCBIfam" id="NF001531">
    <property type="entry name" value="PRK00364.2-2"/>
    <property type="match status" value="1"/>
</dbReference>
<dbReference type="PANTHER" id="PTHR10772">
    <property type="entry name" value="10 KDA HEAT SHOCK PROTEIN"/>
    <property type="match status" value="1"/>
</dbReference>
<dbReference type="PANTHER" id="PTHR10772:SF58">
    <property type="entry name" value="CO-CHAPERONIN GROES"/>
    <property type="match status" value="1"/>
</dbReference>
<dbReference type="Pfam" id="PF00166">
    <property type="entry name" value="Cpn10"/>
    <property type="match status" value="1"/>
</dbReference>
<dbReference type="PRINTS" id="PR00297">
    <property type="entry name" value="CHAPERONIN10"/>
</dbReference>
<dbReference type="SMART" id="SM00883">
    <property type="entry name" value="Cpn10"/>
    <property type="match status" value="1"/>
</dbReference>
<dbReference type="SUPFAM" id="SSF50129">
    <property type="entry name" value="GroES-like"/>
    <property type="match status" value="1"/>
</dbReference>
<dbReference type="PROSITE" id="PS00681">
    <property type="entry name" value="CHAPERONINS_CPN10"/>
    <property type="match status" value="1"/>
</dbReference>
<evidence type="ECO:0000255" key="1">
    <source>
        <dbReference type="HAMAP-Rule" id="MF_00580"/>
    </source>
</evidence>
<feature type="chain" id="PRO_1000129619" description="Co-chaperonin GroES">
    <location>
        <begin position="1"/>
        <end position="95"/>
    </location>
</feature>
<sequence length="95" mass="10159">MNIRPLHDRVIVERQESESKSAGGIVLTGSAAEKSTRGIILAVGNGRILENGSVQPLDVKVGDSVIFAEGNIKAEKIDGKEVLIMSEYNILAIVE</sequence>
<keyword id="KW-0143">Chaperone</keyword>
<keyword id="KW-0963">Cytoplasm</keyword>
<organism>
    <name type="scientific">Aliivibrio salmonicida (strain LFI1238)</name>
    <name type="common">Vibrio salmonicida (strain LFI1238)</name>
    <dbReference type="NCBI Taxonomy" id="316275"/>
    <lineage>
        <taxon>Bacteria</taxon>
        <taxon>Pseudomonadati</taxon>
        <taxon>Pseudomonadota</taxon>
        <taxon>Gammaproteobacteria</taxon>
        <taxon>Vibrionales</taxon>
        <taxon>Vibrionaceae</taxon>
        <taxon>Aliivibrio</taxon>
    </lineage>
</organism>
<accession>B6ENX1</accession>
<protein>
    <recommendedName>
        <fullName evidence="1">Co-chaperonin GroES</fullName>
    </recommendedName>
    <alternativeName>
        <fullName evidence="1">10 kDa chaperonin</fullName>
    </alternativeName>
    <alternativeName>
        <fullName evidence="1">Chaperonin-10</fullName>
        <shortName evidence="1">Cpn10</shortName>
    </alternativeName>
</protein>